<evidence type="ECO:0000256" key="1">
    <source>
        <dbReference type="SAM" id="MobiDB-lite"/>
    </source>
</evidence>
<evidence type="ECO:0000305" key="2"/>
<evidence type="ECO:0000312" key="3">
    <source>
        <dbReference type="WormBase" id="C28C12.3"/>
    </source>
</evidence>
<comment type="similarity">
    <text evidence="2">Belongs to the SXP/RAL-2 family.</text>
</comment>
<dbReference type="EMBL" id="FO080480">
    <property type="protein sequence ID" value="CCD64005.1"/>
    <property type="molecule type" value="Genomic_DNA"/>
</dbReference>
<dbReference type="PIR" id="T15679">
    <property type="entry name" value="T15679"/>
</dbReference>
<dbReference type="RefSeq" id="NP_501449.1">
    <property type="nucleotide sequence ID" value="NM_069048.2"/>
</dbReference>
<dbReference type="SMR" id="P50437"/>
<dbReference type="BioGRID" id="47815">
    <property type="interactions" value="1"/>
</dbReference>
<dbReference type="FunCoup" id="P50437">
    <property type="interactions" value="386"/>
</dbReference>
<dbReference type="IntAct" id="P50437">
    <property type="interactions" value="1"/>
</dbReference>
<dbReference type="STRING" id="6239.C28C12.3.1"/>
<dbReference type="PaxDb" id="6239-C28C12.3"/>
<dbReference type="PeptideAtlas" id="P50437"/>
<dbReference type="EnsemblMetazoa" id="C28C12.3.1">
    <property type="protein sequence ID" value="C28C12.3.1"/>
    <property type="gene ID" value="WBGene00016179"/>
</dbReference>
<dbReference type="GeneID" id="182977"/>
<dbReference type="KEGG" id="cel:CELE_C28C12.3"/>
<dbReference type="UCSC" id="C28C12.3">
    <property type="organism name" value="c. elegans"/>
</dbReference>
<dbReference type="AGR" id="WB:WBGene00016179"/>
<dbReference type="CTD" id="182977"/>
<dbReference type="WormBase" id="C28C12.3">
    <property type="protein sequence ID" value="CE04110"/>
    <property type="gene ID" value="WBGene00016179"/>
    <property type="gene designation" value="srlf-2"/>
</dbReference>
<dbReference type="eggNOG" id="ENOG502TGTH">
    <property type="taxonomic scope" value="Eukaryota"/>
</dbReference>
<dbReference type="GeneTree" id="ENSGT00970000196098"/>
<dbReference type="HOGENOM" id="CLU_084863_0_0_1"/>
<dbReference type="InParanoid" id="P50437"/>
<dbReference type="OMA" id="GEFKPKH"/>
<dbReference type="OrthoDB" id="5867022at2759"/>
<dbReference type="PhylomeDB" id="P50437"/>
<dbReference type="PRO" id="PR:P50437"/>
<dbReference type="Proteomes" id="UP000001940">
    <property type="component" value="Chromosome IV"/>
</dbReference>
<dbReference type="Bgee" id="WBGene00016179">
    <property type="expression patterns" value="Expressed in adult organism and 1 other cell type or tissue"/>
</dbReference>
<dbReference type="InterPro" id="IPR003677">
    <property type="entry name" value="ANIS5_cation-bd"/>
</dbReference>
<dbReference type="InterPro" id="IPR052823">
    <property type="entry name" value="SXP/RAL-2_related"/>
</dbReference>
<dbReference type="PANTHER" id="PTHR21593">
    <property type="entry name" value="PRION-LIKE- Q/N-RICH -DOMAIN-BEARING PROTEIN PROTEIN"/>
    <property type="match status" value="1"/>
</dbReference>
<dbReference type="PANTHER" id="PTHR21593:SF22">
    <property type="entry name" value="PROTEIN CBG18492"/>
    <property type="match status" value="1"/>
</dbReference>
<dbReference type="Pfam" id="PF02520">
    <property type="entry name" value="ANIS5_cation-bd"/>
    <property type="match status" value="1"/>
</dbReference>
<keyword id="KW-1185">Reference proteome</keyword>
<name>YY23_CAEEL</name>
<organism>
    <name type="scientific">Caenorhabditis elegans</name>
    <dbReference type="NCBI Taxonomy" id="6239"/>
    <lineage>
        <taxon>Eukaryota</taxon>
        <taxon>Metazoa</taxon>
        <taxon>Ecdysozoa</taxon>
        <taxon>Nematoda</taxon>
        <taxon>Chromadorea</taxon>
        <taxon>Rhabditida</taxon>
        <taxon>Rhabditina</taxon>
        <taxon>Rhabditomorpha</taxon>
        <taxon>Rhabditoidea</taxon>
        <taxon>Rhabditidae</taxon>
        <taxon>Peloderinae</taxon>
        <taxon>Caenorhabditis</taxon>
    </lineage>
</organism>
<proteinExistence type="inferred from homology"/>
<sequence length="195" mass="20183">MAQNLLFCTIAFVFVAVAMAGPGGRGGPHGPGGHGPRGGPGLPPFLVNVTAAGRKEFEAVFKNETLTIAEANTQIAALAEKYGVTATYNEFVANRTALLAEVKKNQTAVIGNLTAVSAQLATIYQNKDQTRKAQEEAVDALRKEHPVEVNAIKFIRAQLGGEKVHGGSHGGLRGGPGGPRDGPRGGPRGGPRGGR</sequence>
<accession>P50437</accession>
<protein>
    <recommendedName>
        <fullName evidence="3">SXP/RAL-2-like protein 2</fullName>
    </recommendedName>
</protein>
<reference key="1">
    <citation type="journal article" date="1998" name="Science">
        <title>Genome sequence of the nematode C. elegans: a platform for investigating biology.</title>
        <authorList>
            <consortium name="The C. elegans sequencing consortium"/>
        </authorList>
    </citation>
    <scope>NUCLEOTIDE SEQUENCE [LARGE SCALE GENOMIC DNA]</scope>
    <source>
        <strain>Bristol N2</strain>
    </source>
</reference>
<feature type="chain" id="PRO_0000065194" description="SXP/RAL-2-like protein 2">
    <location>
        <begin position="1"/>
        <end position="195"/>
    </location>
</feature>
<feature type="region of interest" description="Disordered" evidence="1">
    <location>
        <begin position="162"/>
        <end position="195"/>
    </location>
</feature>
<feature type="compositionally biased region" description="Gly residues" evidence="1">
    <location>
        <begin position="167"/>
        <end position="195"/>
    </location>
</feature>
<gene>
    <name evidence="3" type="primary">srlf-2</name>
    <name evidence="3" type="ORF">C28C12.3</name>
</gene>